<dbReference type="EMBL" id="Z72618">
    <property type="protein sequence ID" value="CAA96802.1"/>
    <property type="molecule type" value="Genomic_DNA"/>
</dbReference>
<dbReference type="EMBL" id="AY558496">
    <property type="protein sequence ID" value="AAS56822.1"/>
    <property type="molecule type" value="Genomic_DNA"/>
</dbReference>
<dbReference type="EMBL" id="BK006941">
    <property type="protein sequence ID" value="DAA08010.1"/>
    <property type="molecule type" value="Genomic_DNA"/>
</dbReference>
<dbReference type="PIR" id="S64103">
    <property type="entry name" value="S64103"/>
</dbReference>
<dbReference type="RefSeq" id="NP_011419.1">
    <property type="nucleotide sequence ID" value="NM_001180961.1"/>
</dbReference>
<dbReference type="SMR" id="P53147"/>
<dbReference type="BioGRID" id="33154">
    <property type="interactions" value="61"/>
</dbReference>
<dbReference type="DIP" id="DIP-980N"/>
<dbReference type="FunCoup" id="P53147">
    <property type="interactions" value="579"/>
</dbReference>
<dbReference type="IntAct" id="P53147">
    <property type="interactions" value="3"/>
</dbReference>
<dbReference type="MINT" id="P53147"/>
<dbReference type="STRING" id="4932.YGL096W"/>
<dbReference type="GlyGen" id="P53147">
    <property type="glycosylation" value="1 site"/>
</dbReference>
<dbReference type="iPTMnet" id="P53147"/>
<dbReference type="PaxDb" id="4932-YGL096W"/>
<dbReference type="PeptideAtlas" id="P53147"/>
<dbReference type="EnsemblFungi" id="YGL096W_mRNA">
    <property type="protein sequence ID" value="YGL096W"/>
    <property type="gene ID" value="YGL096W"/>
</dbReference>
<dbReference type="GeneID" id="852783"/>
<dbReference type="KEGG" id="sce:YGL096W"/>
<dbReference type="AGR" id="SGD:S000003064"/>
<dbReference type="SGD" id="S000003064">
    <property type="gene designation" value="TOS8"/>
</dbReference>
<dbReference type="VEuPathDB" id="FungiDB:YGL096W"/>
<dbReference type="eggNOG" id="KOG0773">
    <property type="taxonomic scope" value="Eukaryota"/>
</dbReference>
<dbReference type="GeneTree" id="ENSGT00940000176464"/>
<dbReference type="HOGENOM" id="CLU_094664_0_0_1"/>
<dbReference type="InParanoid" id="P53147"/>
<dbReference type="OMA" id="VNESMMV"/>
<dbReference type="OrthoDB" id="10056939at2759"/>
<dbReference type="BioCyc" id="YEAST:G3O-30596-MONOMER"/>
<dbReference type="BioGRID-ORCS" id="852783">
    <property type="hits" value="0 hits in 13 CRISPR screens"/>
</dbReference>
<dbReference type="PRO" id="PR:P53147"/>
<dbReference type="Proteomes" id="UP000002311">
    <property type="component" value="Chromosome VII"/>
</dbReference>
<dbReference type="RNAct" id="P53147">
    <property type="molecule type" value="protein"/>
</dbReference>
<dbReference type="GO" id="GO:0000785">
    <property type="term" value="C:chromatin"/>
    <property type="evidence" value="ECO:0000314"/>
    <property type="project" value="SGD"/>
</dbReference>
<dbReference type="GO" id="GO:0005634">
    <property type="term" value="C:nucleus"/>
    <property type="evidence" value="ECO:0007669"/>
    <property type="project" value="UniProtKB-SubCell"/>
</dbReference>
<dbReference type="GO" id="GO:0003682">
    <property type="term" value="F:chromatin binding"/>
    <property type="evidence" value="ECO:0000314"/>
    <property type="project" value="SGD"/>
</dbReference>
<dbReference type="GO" id="GO:0003677">
    <property type="term" value="F:DNA binding"/>
    <property type="evidence" value="ECO:0007669"/>
    <property type="project" value="UniProtKB-KW"/>
</dbReference>
<dbReference type="GO" id="GO:0006355">
    <property type="term" value="P:regulation of DNA-templated transcription"/>
    <property type="evidence" value="ECO:0007669"/>
    <property type="project" value="InterPro"/>
</dbReference>
<dbReference type="CDD" id="cd00086">
    <property type="entry name" value="homeodomain"/>
    <property type="match status" value="1"/>
</dbReference>
<dbReference type="Gene3D" id="1.10.10.60">
    <property type="entry name" value="Homeodomain-like"/>
    <property type="match status" value="1"/>
</dbReference>
<dbReference type="InterPro" id="IPR001356">
    <property type="entry name" value="HD"/>
</dbReference>
<dbReference type="InterPro" id="IPR009057">
    <property type="entry name" value="Homeodomain-like_sf"/>
</dbReference>
<dbReference type="InterPro" id="IPR008422">
    <property type="entry name" value="KN_HD"/>
</dbReference>
<dbReference type="InterPro" id="IPR050224">
    <property type="entry name" value="TALE_homeobox"/>
</dbReference>
<dbReference type="PANTHER" id="PTHR11850">
    <property type="entry name" value="HOMEOBOX PROTEIN TRANSCRIPTION FACTORS"/>
    <property type="match status" value="1"/>
</dbReference>
<dbReference type="Pfam" id="PF05920">
    <property type="entry name" value="Homeobox_KN"/>
    <property type="match status" value="1"/>
</dbReference>
<dbReference type="SMART" id="SM00389">
    <property type="entry name" value="HOX"/>
    <property type="match status" value="1"/>
</dbReference>
<dbReference type="SUPFAM" id="SSF46689">
    <property type="entry name" value="Homeodomain-like"/>
    <property type="match status" value="1"/>
</dbReference>
<dbReference type="PROSITE" id="PS00027">
    <property type="entry name" value="HOMEOBOX_1"/>
    <property type="match status" value="1"/>
</dbReference>
<dbReference type="PROSITE" id="PS50071">
    <property type="entry name" value="HOMEOBOX_2"/>
    <property type="match status" value="1"/>
</dbReference>
<keyword id="KW-0238">DNA-binding</keyword>
<keyword id="KW-0371">Homeobox</keyword>
<keyword id="KW-0539">Nucleus</keyword>
<keyword id="KW-1185">Reference proteome</keyword>
<name>TOS8_YEAST</name>
<proteinExistence type="inferred from homology"/>
<gene>
    <name type="primary">TOS8</name>
    <name type="ordered locus">YGL096W</name>
</gene>
<protein>
    <recommendedName>
        <fullName>Homeobox protein TOS8</fullName>
    </recommendedName>
    <alternativeName>
        <fullName>Target of SBF 8</fullName>
    </alternativeName>
</protein>
<sequence>MGTSIVNLNQKIELPPIQVLFESLNRENETKPHFEERRLYQPNPSFVPRTNIAVGSPVNPVPVSSPVFFIGPSPQRSIQNHNAIMTQNIRQYPVIYNNNREVISTGERNYIITVGGPPVTSSQPEYEHISTPNFYQEQRLAQPHPVNESMMIGGYTNPQPISISRGKMLSGNISTNSVRGSNNGYSAKEKKHKAHGKRSNLPKATVSILNKWLHEHVNNPYPTVQEKRELLAKTGLTKLQISNWFINARRRKIFSGQNDANNFRRKFSSSTNLAKF</sequence>
<organism>
    <name type="scientific">Saccharomyces cerevisiae (strain ATCC 204508 / S288c)</name>
    <name type="common">Baker's yeast</name>
    <dbReference type="NCBI Taxonomy" id="559292"/>
    <lineage>
        <taxon>Eukaryota</taxon>
        <taxon>Fungi</taxon>
        <taxon>Dikarya</taxon>
        <taxon>Ascomycota</taxon>
        <taxon>Saccharomycotina</taxon>
        <taxon>Saccharomycetes</taxon>
        <taxon>Saccharomycetales</taxon>
        <taxon>Saccharomycetaceae</taxon>
        <taxon>Saccharomyces</taxon>
    </lineage>
</organism>
<feature type="chain" id="PRO_0000049400" description="Homeobox protein TOS8">
    <location>
        <begin position="1"/>
        <end position="276"/>
    </location>
</feature>
<feature type="DNA-binding region" description="Homeobox; TALE-type" evidence="1">
    <location>
        <begin position="194"/>
        <end position="256"/>
    </location>
</feature>
<feature type="region of interest" description="Disordered" evidence="2">
    <location>
        <begin position="176"/>
        <end position="199"/>
    </location>
</feature>
<feature type="compositionally biased region" description="Polar residues" evidence="2">
    <location>
        <begin position="176"/>
        <end position="185"/>
    </location>
</feature>
<feature type="compositionally biased region" description="Basic residues" evidence="2">
    <location>
        <begin position="189"/>
        <end position="199"/>
    </location>
</feature>
<accession>P53147</accession>
<accession>D6VU49</accession>
<reference key="1">
    <citation type="journal article" date="1997" name="Yeast">
        <title>Sequence analysis of 203 kilobases from Saccharomyces cerevisiae chromosome VII.</title>
        <authorList>
            <person name="Rieger M."/>
            <person name="Brueckner M."/>
            <person name="Schaefer M."/>
            <person name="Mueller-Auer S."/>
        </authorList>
    </citation>
    <scope>NUCLEOTIDE SEQUENCE [GENOMIC DNA]</scope>
    <source>
        <strain>ATCC 204508 / S288c</strain>
    </source>
</reference>
<reference key="2">
    <citation type="journal article" date="1997" name="Nature">
        <title>The nucleotide sequence of Saccharomyces cerevisiae chromosome VII.</title>
        <authorList>
            <person name="Tettelin H."/>
            <person name="Agostoni-Carbone M.L."/>
            <person name="Albermann K."/>
            <person name="Albers M."/>
            <person name="Arroyo J."/>
            <person name="Backes U."/>
            <person name="Barreiros T."/>
            <person name="Bertani I."/>
            <person name="Bjourson A.J."/>
            <person name="Brueckner M."/>
            <person name="Bruschi C.V."/>
            <person name="Carignani G."/>
            <person name="Castagnoli L."/>
            <person name="Cerdan E."/>
            <person name="Clemente M.L."/>
            <person name="Coblenz A."/>
            <person name="Coglievina M."/>
            <person name="Coissac E."/>
            <person name="Defoor E."/>
            <person name="Del Bino S."/>
            <person name="Delius H."/>
            <person name="Delneri D."/>
            <person name="de Wergifosse P."/>
            <person name="Dujon B."/>
            <person name="Durand P."/>
            <person name="Entian K.-D."/>
            <person name="Eraso P."/>
            <person name="Escribano V."/>
            <person name="Fabiani L."/>
            <person name="Fartmann B."/>
            <person name="Feroli F."/>
            <person name="Feuermann M."/>
            <person name="Frontali L."/>
            <person name="Garcia-Gonzalez M."/>
            <person name="Garcia-Saez M.I."/>
            <person name="Goffeau A."/>
            <person name="Guerreiro P."/>
            <person name="Hani J."/>
            <person name="Hansen M."/>
            <person name="Hebling U."/>
            <person name="Hernandez K."/>
            <person name="Heumann K."/>
            <person name="Hilger F."/>
            <person name="Hofmann B."/>
            <person name="Indge K.J."/>
            <person name="James C.M."/>
            <person name="Klima R."/>
            <person name="Koetter P."/>
            <person name="Kramer B."/>
            <person name="Kramer W."/>
            <person name="Lauquin G."/>
            <person name="Leuther H."/>
            <person name="Louis E.J."/>
            <person name="Maillier E."/>
            <person name="Marconi A."/>
            <person name="Martegani E."/>
            <person name="Mazon M.J."/>
            <person name="Mazzoni C."/>
            <person name="McReynolds A.D.K."/>
            <person name="Melchioretto P."/>
            <person name="Mewes H.-W."/>
            <person name="Minenkova O."/>
            <person name="Mueller-Auer S."/>
            <person name="Nawrocki A."/>
            <person name="Netter P."/>
            <person name="Neu R."/>
            <person name="Nombela C."/>
            <person name="Oliver S.G."/>
            <person name="Panzeri L."/>
            <person name="Paoluzi S."/>
            <person name="Plevani P."/>
            <person name="Portetelle D."/>
            <person name="Portillo F."/>
            <person name="Potier S."/>
            <person name="Purnelle B."/>
            <person name="Rieger M."/>
            <person name="Riles L."/>
            <person name="Rinaldi T."/>
            <person name="Robben J."/>
            <person name="Rodrigues-Pousada C."/>
            <person name="Rodriguez-Belmonte E."/>
            <person name="Rodriguez-Torres A.M."/>
            <person name="Rose M."/>
            <person name="Ruzzi M."/>
            <person name="Saliola M."/>
            <person name="Sanchez-Perez M."/>
            <person name="Schaefer B."/>
            <person name="Schaefer M."/>
            <person name="Scharfe M."/>
            <person name="Schmidheini T."/>
            <person name="Schreer A."/>
            <person name="Skala J."/>
            <person name="Souciet J.-L."/>
            <person name="Steensma H.Y."/>
            <person name="Talla E."/>
            <person name="Thierry A."/>
            <person name="Vandenbol M."/>
            <person name="van der Aart Q.J.M."/>
            <person name="Van Dyck L."/>
            <person name="Vanoni M."/>
            <person name="Verhasselt P."/>
            <person name="Voet M."/>
            <person name="Volckaert G."/>
            <person name="Wambutt R."/>
            <person name="Watson M.D."/>
            <person name="Weber N."/>
            <person name="Wedler E."/>
            <person name="Wedler H."/>
            <person name="Wipfli P."/>
            <person name="Wolf K."/>
            <person name="Wright L.F."/>
            <person name="Zaccaria P."/>
            <person name="Zimmermann M."/>
            <person name="Zollner A."/>
            <person name="Kleine K."/>
        </authorList>
    </citation>
    <scope>NUCLEOTIDE SEQUENCE [LARGE SCALE GENOMIC DNA]</scope>
    <source>
        <strain>ATCC 204508 / S288c</strain>
    </source>
</reference>
<reference key="3">
    <citation type="journal article" date="2014" name="G3 (Bethesda)">
        <title>The reference genome sequence of Saccharomyces cerevisiae: Then and now.</title>
        <authorList>
            <person name="Engel S.R."/>
            <person name="Dietrich F.S."/>
            <person name="Fisk D.G."/>
            <person name="Binkley G."/>
            <person name="Balakrishnan R."/>
            <person name="Costanzo M.C."/>
            <person name="Dwight S.S."/>
            <person name="Hitz B.C."/>
            <person name="Karra K."/>
            <person name="Nash R.S."/>
            <person name="Weng S."/>
            <person name="Wong E.D."/>
            <person name="Lloyd P."/>
            <person name="Skrzypek M.S."/>
            <person name="Miyasato S.R."/>
            <person name="Simison M."/>
            <person name="Cherry J.M."/>
        </authorList>
    </citation>
    <scope>GENOME REANNOTATION</scope>
    <source>
        <strain>ATCC 204508 / S288c</strain>
    </source>
</reference>
<reference key="4">
    <citation type="journal article" date="2007" name="Genome Res.">
        <title>Approaching a complete repository of sequence-verified protein-encoding clones for Saccharomyces cerevisiae.</title>
        <authorList>
            <person name="Hu Y."/>
            <person name="Rolfs A."/>
            <person name="Bhullar B."/>
            <person name="Murthy T.V.S."/>
            <person name="Zhu C."/>
            <person name="Berger M.F."/>
            <person name="Camargo A.A."/>
            <person name="Kelley F."/>
            <person name="McCarron S."/>
            <person name="Jepson D."/>
            <person name="Richardson A."/>
            <person name="Raphael J."/>
            <person name="Moreira D."/>
            <person name="Taycher E."/>
            <person name="Zuo D."/>
            <person name="Mohr S."/>
            <person name="Kane M.F."/>
            <person name="Williamson J."/>
            <person name="Simpson A.J.G."/>
            <person name="Bulyk M.L."/>
            <person name="Harlow E."/>
            <person name="Marsischky G."/>
            <person name="Kolodner R.D."/>
            <person name="LaBaer J."/>
        </authorList>
    </citation>
    <scope>NUCLEOTIDE SEQUENCE [GENOMIC DNA]</scope>
    <source>
        <strain>ATCC 204508 / S288c</strain>
    </source>
</reference>
<evidence type="ECO:0000255" key="1">
    <source>
        <dbReference type="PROSITE-ProRule" id="PRU00108"/>
    </source>
</evidence>
<evidence type="ECO:0000256" key="2">
    <source>
        <dbReference type="SAM" id="MobiDB-lite"/>
    </source>
</evidence>
<evidence type="ECO:0000305" key="3"/>
<comment type="subcellular location">
    <subcellularLocation>
        <location evidence="3">Nucleus</location>
    </subcellularLocation>
</comment>
<comment type="similarity">
    <text evidence="3">Belongs to the TALE/CUP9 homeobox family.</text>
</comment>